<reference key="1">
    <citation type="journal article" date="2005" name="J. Bacteriol.">
        <title>Insights on evolution of virulence and resistance from the complete genome analysis of an early methicillin-resistant Staphylococcus aureus strain and a biofilm-producing methicillin-resistant Staphylococcus epidermidis strain.</title>
        <authorList>
            <person name="Gill S.R."/>
            <person name="Fouts D.E."/>
            <person name="Archer G.L."/>
            <person name="Mongodin E.F."/>
            <person name="DeBoy R.T."/>
            <person name="Ravel J."/>
            <person name="Paulsen I.T."/>
            <person name="Kolonay J.F."/>
            <person name="Brinkac L.M."/>
            <person name="Beanan M.J."/>
            <person name="Dodson R.J."/>
            <person name="Daugherty S.C."/>
            <person name="Madupu R."/>
            <person name="Angiuoli S.V."/>
            <person name="Durkin A.S."/>
            <person name="Haft D.H."/>
            <person name="Vamathevan J.J."/>
            <person name="Khouri H."/>
            <person name="Utterback T.R."/>
            <person name="Lee C."/>
            <person name="Dimitrov G."/>
            <person name="Jiang L."/>
            <person name="Qin H."/>
            <person name="Weidman J."/>
            <person name="Tran K."/>
            <person name="Kang K.H."/>
            <person name="Hance I.R."/>
            <person name="Nelson K.E."/>
            <person name="Fraser C.M."/>
        </authorList>
    </citation>
    <scope>NUCLEOTIDE SEQUENCE [LARGE SCALE GENOMIC DNA]</scope>
    <source>
        <strain>ATCC 35984 / DSM 28319 / BCRC 17069 / CCUG 31568 / BM 3577 / RP62A</strain>
    </source>
</reference>
<name>LEU1_STAEQ</name>
<comment type="function">
    <text evidence="1">Catalyzes the condensation of the acetyl group of acetyl-CoA with 3-methyl-2-oxobutanoate (2-ketoisovalerate) to form 3-carboxy-3-hydroxy-4-methylpentanoate (2-isopropylmalate).</text>
</comment>
<comment type="catalytic activity">
    <reaction evidence="1">
        <text>3-methyl-2-oxobutanoate + acetyl-CoA + H2O = (2S)-2-isopropylmalate + CoA + H(+)</text>
        <dbReference type="Rhea" id="RHEA:21524"/>
        <dbReference type="ChEBI" id="CHEBI:1178"/>
        <dbReference type="ChEBI" id="CHEBI:11851"/>
        <dbReference type="ChEBI" id="CHEBI:15377"/>
        <dbReference type="ChEBI" id="CHEBI:15378"/>
        <dbReference type="ChEBI" id="CHEBI:57287"/>
        <dbReference type="ChEBI" id="CHEBI:57288"/>
        <dbReference type="EC" id="2.3.3.13"/>
    </reaction>
</comment>
<comment type="cofactor">
    <cofactor evidence="1">
        <name>Mn(2+)</name>
        <dbReference type="ChEBI" id="CHEBI:29035"/>
    </cofactor>
</comment>
<comment type="pathway">
    <text evidence="1">Amino-acid biosynthesis; L-leucine biosynthesis; L-leucine from 3-methyl-2-oxobutanoate: step 1/4.</text>
</comment>
<comment type="subunit">
    <text evidence="1">Homodimer.</text>
</comment>
<comment type="subcellular location">
    <subcellularLocation>
        <location evidence="1">Cytoplasm</location>
    </subcellularLocation>
</comment>
<comment type="similarity">
    <text evidence="1">Belongs to the alpha-IPM synthase/homocitrate synthase family. LeuA type 1 subfamily.</text>
</comment>
<evidence type="ECO:0000255" key="1">
    <source>
        <dbReference type="HAMAP-Rule" id="MF_01025"/>
    </source>
</evidence>
<keyword id="KW-0028">Amino-acid biosynthesis</keyword>
<keyword id="KW-0100">Branched-chain amino acid biosynthesis</keyword>
<keyword id="KW-0963">Cytoplasm</keyword>
<keyword id="KW-0432">Leucine biosynthesis</keyword>
<keyword id="KW-0464">Manganese</keyword>
<keyword id="KW-0479">Metal-binding</keyword>
<keyword id="KW-1185">Reference proteome</keyword>
<keyword id="KW-0808">Transferase</keyword>
<gene>
    <name evidence="1" type="primary">leuA</name>
    <name type="ordered locus">SERP1669</name>
</gene>
<feature type="chain" id="PRO_0000140385" description="2-isopropylmalate synthase">
    <location>
        <begin position="1"/>
        <end position="511"/>
    </location>
</feature>
<feature type="domain" description="Pyruvate carboxyltransferase" evidence="1">
    <location>
        <begin position="5"/>
        <end position="267"/>
    </location>
</feature>
<feature type="region of interest" description="Regulatory domain" evidence="1">
    <location>
        <begin position="391"/>
        <end position="511"/>
    </location>
</feature>
<feature type="binding site" evidence="1">
    <location>
        <position position="14"/>
    </location>
    <ligand>
        <name>Mn(2+)</name>
        <dbReference type="ChEBI" id="CHEBI:29035"/>
    </ligand>
</feature>
<feature type="binding site" evidence="1">
    <location>
        <position position="202"/>
    </location>
    <ligand>
        <name>Mn(2+)</name>
        <dbReference type="ChEBI" id="CHEBI:29035"/>
    </ligand>
</feature>
<feature type="binding site" evidence="1">
    <location>
        <position position="204"/>
    </location>
    <ligand>
        <name>Mn(2+)</name>
        <dbReference type="ChEBI" id="CHEBI:29035"/>
    </ligand>
</feature>
<feature type="binding site" evidence="1">
    <location>
        <position position="238"/>
    </location>
    <ligand>
        <name>Mn(2+)</name>
        <dbReference type="ChEBI" id="CHEBI:29035"/>
    </ligand>
</feature>
<protein>
    <recommendedName>
        <fullName evidence="1">2-isopropylmalate synthase</fullName>
        <ecNumber evidence="1">2.3.3.13</ecNumber>
    </recommendedName>
    <alternativeName>
        <fullName evidence="1">Alpha-IPM synthase</fullName>
    </alternativeName>
    <alternativeName>
        <fullName evidence="1">Alpha-isopropylmalate synthase</fullName>
    </alternativeName>
</protein>
<proteinExistence type="inferred from homology"/>
<sequence>MEEHIQIFDTTLRDGEQTPGVNFTFDERLKIAKQLEKWGVDVLEAGFPASSTGSFKSVEAIAKTLTTTAVCGLARCKKSDIDAVYEATKEAVKPQVHVFIATSPIHLEHKLKMTQDEVLTSIKEHVSYAKQFFEVVQFSPEDATRTEIPFLIECVQTAINAGATIINIPDTVGFSYPTEYGEIFKQLTQAVKSNSKIIFSAHCHDDLGMAVANSLAAIEGGARRIEGTVNGIGERAGNASLEEVALALYVRKDHYGLESQINLEETKKTSDLISRYAGIRVPRNKAIVGQNAFSHESGIHQDGVLKHRETYEIMTPQLVGVNTTELPLGKLSGKHAFAEKLKALGYEIKLEDQVTLFKQFKEIADKKKNVSDRDIHAIIHGSEHEHNAIFQLDNLQLQYVSKGLQSAVVVIKERNGQVKQDSSIGTGSIVAIYNAVDRIFKKDAELIDYRIDSVTEGTDAQAEVHVRIIINHIEVTGIGIDHDILKASCKAYIDAHAKYISEYELKEGIRT</sequence>
<dbReference type="EC" id="2.3.3.13" evidence="1"/>
<dbReference type="EMBL" id="CP000029">
    <property type="protein sequence ID" value="AAW55016.1"/>
    <property type="molecule type" value="Genomic_DNA"/>
</dbReference>
<dbReference type="RefSeq" id="WP_001830007.1">
    <property type="nucleotide sequence ID" value="NC_002976.3"/>
</dbReference>
<dbReference type="SMR" id="Q5HMF9"/>
<dbReference type="STRING" id="176279.SERP1669"/>
<dbReference type="KEGG" id="ser:SERP1669"/>
<dbReference type="eggNOG" id="COG0119">
    <property type="taxonomic scope" value="Bacteria"/>
</dbReference>
<dbReference type="HOGENOM" id="CLU_022158_0_1_9"/>
<dbReference type="UniPathway" id="UPA00048">
    <property type="reaction ID" value="UER00070"/>
</dbReference>
<dbReference type="Proteomes" id="UP000000531">
    <property type="component" value="Chromosome"/>
</dbReference>
<dbReference type="GO" id="GO:0005737">
    <property type="term" value="C:cytoplasm"/>
    <property type="evidence" value="ECO:0007669"/>
    <property type="project" value="UniProtKB-SubCell"/>
</dbReference>
<dbReference type="GO" id="GO:0003852">
    <property type="term" value="F:2-isopropylmalate synthase activity"/>
    <property type="evidence" value="ECO:0007669"/>
    <property type="project" value="UniProtKB-UniRule"/>
</dbReference>
<dbReference type="GO" id="GO:0003985">
    <property type="term" value="F:acetyl-CoA C-acetyltransferase activity"/>
    <property type="evidence" value="ECO:0007669"/>
    <property type="project" value="UniProtKB-UniRule"/>
</dbReference>
<dbReference type="GO" id="GO:0030145">
    <property type="term" value="F:manganese ion binding"/>
    <property type="evidence" value="ECO:0007669"/>
    <property type="project" value="UniProtKB-UniRule"/>
</dbReference>
<dbReference type="GO" id="GO:0009098">
    <property type="term" value="P:L-leucine biosynthetic process"/>
    <property type="evidence" value="ECO:0007669"/>
    <property type="project" value="UniProtKB-UniRule"/>
</dbReference>
<dbReference type="CDD" id="cd07940">
    <property type="entry name" value="DRE_TIM_IPMS"/>
    <property type="match status" value="1"/>
</dbReference>
<dbReference type="FunFam" id="1.10.238.260:FF:000001">
    <property type="entry name" value="2-isopropylmalate synthase"/>
    <property type="match status" value="1"/>
</dbReference>
<dbReference type="FunFam" id="3.20.20.70:FF:000010">
    <property type="entry name" value="2-isopropylmalate synthase"/>
    <property type="match status" value="1"/>
</dbReference>
<dbReference type="FunFam" id="3.30.160.270:FF:000003">
    <property type="entry name" value="2-isopropylmalate synthase"/>
    <property type="match status" value="1"/>
</dbReference>
<dbReference type="Gene3D" id="1.10.238.260">
    <property type="match status" value="1"/>
</dbReference>
<dbReference type="Gene3D" id="3.30.160.270">
    <property type="match status" value="1"/>
</dbReference>
<dbReference type="Gene3D" id="3.20.20.70">
    <property type="entry name" value="Aldolase class I"/>
    <property type="match status" value="1"/>
</dbReference>
<dbReference type="HAMAP" id="MF_01025">
    <property type="entry name" value="LeuA_type1"/>
    <property type="match status" value="1"/>
</dbReference>
<dbReference type="InterPro" id="IPR050073">
    <property type="entry name" value="2-IPM_HCS-like"/>
</dbReference>
<dbReference type="InterPro" id="IPR013709">
    <property type="entry name" value="2-isopropylmalate_synth_dimer"/>
</dbReference>
<dbReference type="InterPro" id="IPR002034">
    <property type="entry name" value="AIPM/Hcit_synth_CS"/>
</dbReference>
<dbReference type="InterPro" id="IPR013785">
    <property type="entry name" value="Aldolase_TIM"/>
</dbReference>
<dbReference type="InterPro" id="IPR054691">
    <property type="entry name" value="LeuA/HCS_post-cat"/>
</dbReference>
<dbReference type="InterPro" id="IPR036230">
    <property type="entry name" value="LeuA_allosteric_dom_sf"/>
</dbReference>
<dbReference type="InterPro" id="IPR005671">
    <property type="entry name" value="LeuA_bact_synth"/>
</dbReference>
<dbReference type="InterPro" id="IPR000891">
    <property type="entry name" value="PYR_CT"/>
</dbReference>
<dbReference type="NCBIfam" id="TIGR00973">
    <property type="entry name" value="leuA_bact"/>
    <property type="match status" value="1"/>
</dbReference>
<dbReference type="NCBIfam" id="NF002086">
    <property type="entry name" value="PRK00915.1-3"/>
    <property type="match status" value="1"/>
</dbReference>
<dbReference type="NCBIfam" id="NF002088">
    <property type="entry name" value="PRK00915.1-5"/>
    <property type="match status" value="1"/>
</dbReference>
<dbReference type="PANTHER" id="PTHR10277:SF9">
    <property type="entry name" value="2-ISOPROPYLMALATE SYNTHASE 1, CHLOROPLASTIC-RELATED"/>
    <property type="match status" value="1"/>
</dbReference>
<dbReference type="PANTHER" id="PTHR10277">
    <property type="entry name" value="HOMOCITRATE SYNTHASE-RELATED"/>
    <property type="match status" value="1"/>
</dbReference>
<dbReference type="Pfam" id="PF22617">
    <property type="entry name" value="HCS_D2"/>
    <property type="match status" value="1"/>
</dbReference>
<dbReference type="Pfam" id="PF00682">
    <property type="entry name" value="HMGL-like"/>
    <property type="match status" value="1"/>
</dbReference>
<dbReference type="Pfam" id="PF08502">
    <property type="entry name" value="LeuA_dimer"/>
    <property type="match status" value="1"/>
</dbReference>
<dbReference type="SMART" id="SM00917">
    <property type="entry name" value="LeuA_dimer"/>
    <property type="match status" value="1"/>
</dbReference>
<dbReference type="SUPFAM" id="SSF110921">
    <property type="entry name" value="2-isopropylmalate synthase LeuA, allosteric (dimerisation) domain"/>
    <property type="match status" value="1"/>
</dbReference>
<dbReference type="SUPFAM" id="SSF51569">
    <property type="entry name" value="Aldolase"/>
    <property type="match status" value="1"/>
</dbReference>
<dbReference type="PROSITE" id="PS00816">
    <property type="entry name" value="AIPM_HOMOCIT_SYNTH_2"/>
    <property type="match status" value="1"/>
</dbReference>
<dbReference type="PROSITE" id="PS50991">
    <property type="entry name" value="PYR_CT"/>
    <property type="match status" value="1"/>
</dbReference>
<accession>Q5HMF9</accession>
<organism>
    <name type="scientific">Staphylococcus epidermidis (strain ATCC 35984 / DSM 28319 / BCRC 17069 / CCUG 31568 / BM 3577 / RP62A)</name>
    <dbReference type="NCBI Taxonomy" id="176279"/>
    <lineage>
        <taxon>Bacteria</taxon>
        <taxon>Bacillati</taxon>
        <taxon>Bacillota</taxon>
        <taxon>Bacilli</taxon>
        <taxon>Bacillales</taxon>
        <taxon>Staphylococcaceae</taxon>
        <taxon>Staphylococcus</taxon>
    </lineage>
</organism>